<comment type="function">
    <text evidence="1">One of the early assembly proteins it binds 23S rRNA. One of the proteins that surrounds the polypeptide exit tunnel on the outside of the ribosome. Forms the main docking site for trigger factor binding to the ribosome.</text>
</comment>
<comment type="subunit">
    <text evidence="1">Part of the 50S ribosomal subunit. Contacts protein L29, and trigger factor when it is bound to the ribosome.</text>
</comment>
<comment type="similarity">
    <text evidence="1">Belongs to the universal ribosomal protein uL23 family.</text>
</comment>
<protein>
    <recommendedName>
        <fullName evidence="1">Large ribosomal subunit protein uL23</fullName>
    </recommendedName>
    <alternativeName>
        <fullName evidence="2">50S ribosomal protein L23</fullName>
    </alternativeName>
</protein>
<sequence length="98" mass="10978">MIPDPRDVILRPVVSEKSYGLLDENVYTFIVRPDANKTQIKLAVQQIFNVRVLRVNTINRQGKRKRTKHGWGHRSASKRALVSLAPGDTIEIFGGPGA</sequence>
<evidence type="ECO:0000255" key="1">
    <source>
        <dbReference type="HAMAP-Rule" id="MF_01369"/>
    </source>
</evidence>
<evidence type="ECO:0000305" key="2"/>
<name>RL23_FRACC</name>
<dbReference type="EMBL" id="CP000249">
    <property type="protein sequence ID" value="ABD09968.1"/>
    <property type="molecule type" value="Genomic_DNA"/>
</dbReference>
<dbReference type="RefSeq" id="WP_011435041.1">
    <property type="nucleotide sequence ID" value="NZ_JENI01000032.1"/>
</dbReference>
<dbReference type="SMR" id="Q2JFH4"/>
<dbReference type="STRING" id="106370.Francci3_0584"/>
<dbReference type="KEGG" id="fra:Francci3_0584"/>
<dbReference type="eggNOG" id="COG0089">
    <property type="taxonomic scope" value="Bacteria"/>
</dbReference>
<dbReference type="HOGENOM" id="CLU_037562_3_2_11"/>
<dbReference type="OrthoDB" id="9793353at2"/>
<dbReference type="PhylomeDB" id="Q2JFH4"/>
<dbReference type="Proteomes" id="UP000001937">
    <property type="component" value="Chromosome"/>
</dbReference>
<dbReference type="GO" id="GO:1990904">
    <property type="term" value="C:ribonucleoprotein complex"/>
    <property type="evidence" value="ECO:0007669"/>
    <property type="project" value="UniProtKB-KW"/>
</dbReference>
<dbReference type="GO" id="GO:0005840">
    <property type="term" value="C:ribosome"/>
    <property type="evidence" value="ECO:0007669"/>
    <property type="project" value="UniProtKB-KW"/>
</dbReference>
<dbReference type="GO" id="GO:0019843">
    <property type="term" value="F:rRNA binding"/>
    <property type="evidence" value="ECO:0007669"/>
    <property type="project" value="UniProtKB-UniRule"/>
</dbReference>
<dbReference type="GO" id="GO:0003735">
    <property type="term" value="F:structural constituent of ribosome"/>
    <property type="evidence" value="ECO:0007669"/>
    <property type="project" value="InterPro"/>
</dbReference>
<dbReference type="GO" id="GO:0006412">
    <property type="term" value="P:translation"/>
    <property type="evidence" value="ECO:0007669"/>
    <property type="project" value="UniProtKB-UniRule"/>
</dbReference>
<dbReference type="FunFam" id="3.30.70.330:FF:000001">
    <property type="entry name" value="50S ribosomal protein L23"/>
    <property type="match status" value="1"/>
</dbReference>
<dbReference type="Gene3D" id="3.30.70.330">
    <property type="match status" value="1"/>
</dbReference>
<dbReference type="HAMAP" id="MF_01369_B">
    <property type="entry name" value="Ribosomal_uL23_B"/>
    <property type="match status" value="1"/>
</dbReference>
<dbReference type="InterPro" id="IPR012677">
    <property type="entry name" value="Nucleotide-bd_a/b_plait_sf"/>
</dbReference>
<dbReference type="InterPro" id="IPR013025">
    <property type="entry name" value="Ribosomal_uL23-like"/>
</dbReference>
<dbReference type="InterPro" id="IPR012678">
    <property type="entry name" value="Ribosomal_uL23/eL15/eS24_sf"/>
</dbReference>
<dbReference type="NCBIfam" id="NF004363">
    <property type="entry name" value="PRK05738.2-4"/>
    <property type="match status" value="1"/>
</dbReference>
<dbReference type="NCBIfam" id="NF004364">
    <property type="entry name" value="PRK05738.2-5"/>
    <property type="match status" value="1"/>
</dbReference>
<dbReference type="PANTHER" id="PTHR11620">
    <property type="entry name" value="60S RIBOSOMAL PROTEIN L23A"/>
    <property type="match status" value="1"/>
</dbReference>
<dbReference type="Pfam" id="PF00276">
    <property type="entry name" value="Ribosomal_L23"/>
    <property type="match status" value="1"/>
</dbReference>
<dbReference type="SUPFAM" id="SSF54189">
    <property type="entry name" value="Ribosomal proteins S24e, L23 and L15e"/>
    <property type="match status" value="1"/>
</dbReference>
<proteinExistence type="inferred from homology"/>
<gene>
    <name evidence="1" type="primary">rplW</name>
    <name type="ordered locus">Francci3_0584</name>
</gene>
<organism>
    <name type="scientific">Frankia casuarinae (strain DSM 45818 / CECT 9043 / HFP020203 / CcI3)</name>
    <dbReference type="NCBI Taxonomy" id="106370"/>
    <lineage>
        <taxon>Bacteria</taxon>
        <taxon>Bacillati</taxon>
        <taxon>Actinomycetota</taxon>
        <taxon>Actinomycetes</taxon>
        <taxon>Frankiales</taxon>
        <taxon>Frankiaceae</taxon>
        <taxon>Frankia</taxon>
    </lineage>
</organism>
<reference key="1">
    <citation type="journal article" date="2007" name="Genome Res.">
        <title>Genome characteristics of facultatively symbiotic Frankia sp. strains reflect host range and host plant biogeography.</title>
        <authorList>
            <person name="Normand P."/>
            <person name="Lapierre P."/>
            <person name="Tisa L.S."/>
            <person name="Gogarten J.P."/>
            <person name="Alloisio N."/>
            <person name="Bagnarol E."/>
            <person name="Bassi C.A."/>
            <person name="Berry A.M."/>
            <person name="Bickhart D.M."/>
            <person name="Choisne N."/>
            <person name="Couloux A."/>
            <person name="Cournoyer B."/>
            <person name="Cruveiller S."/>
            <person name="Daubin V."/>
            <person name="Demange N."/>
            <person name="Francino M.P."/>
            <person name="Goltsman E."/>
            <person name="Huang Y."/>
            <person name="Kopp O.R."/>
            <person name="Labarre L."/>
            <person name="Lapidus A."/>
            <person name="Lavire C."/>
            <person name="Marechal J."/>
            <person name="Martinez M."/>
            <person name="Mastronunzio J.E."/>
            <person name="Mullin B.C."/>
            <person name="Niemann J."/>
            <person name="Pujic P."/>
            <person name="Rawnsley T."/>
            <person name="Rouy Z."/>
            <person name="Schenowitz C."/>
            <person name="Sellstedt A."/>
            <person name="Tavares F."/>
            <person name="Tomkins J.P."/>
            <person name="Vallenet D."/>
            <person name="Valverde C."/>
            <person name="Wall L.G."/>
            <person name="Wang Y."/>
            <person name="Medigue C."/>
            <person name="Benson D.R."/>
        </authorList>
    </citation>
    <scope>NUCLEOTIDE SEQUENCE [LARGE SCALE GENOMIC DNA]</scope>
    <source>
        <strain>DSM 45818 / CECT 9043 / HFP020203 / CcI3</strain>
    </source>
</reference>
<accession>Q2JFH4</accession>
<keyword id="KW-1185">Reference proteome</keyword>
<keyword id="KW-0687">Ribonucleoprotein</keyword>
<keyword id="KW-0689">Ribosomal protein</keyword>
<keyword id="KW-0694">RNA-binding</keyword>
<keyword id="KW-0699">rRNA-binding</keyword>
<feature type="chain" id="PRO_1000073443" description="Large ribosomal subunit protein uL23">
    <location>
        <begin position="1"/>
        <end position="98"/>
    </location>
</feature>